<accession>Q9ZDL0</accession>
<reference key="1">
    <citation type="journal article" date="1998" name="Nature">
        <title>The genome sequence of Rickettsia prowazekii and the origin of mitochondria.</title>
        <authorList>
            <person name="Andersson S.G.E."/>
            <person name="Zomorodipour A."/>
            <person name="Andersson J.O."/>
            <person name="Sicheritz-Ponten T."/>
            <person name="Alsmark U.C.M."/>
            <person name="Podowski R.M."/>
            <person name="Naeslund A.K."/>
            <person name="Eriksson A.-S."/>
            <person name="Winkler H.H."/>
            <person name="Kurland C.G."/>
        </authorList>
    </citation>
    <scope>NUCLEOTIDE SEQUENCE [LARGE SCALE GENOMIC DNA]</scope>
    <source>
        <strain>Madrid E</strain>
    </source>
</reference>
<proteinExistence type="predicted"/>
<feature type="chain" id="PRO_0000101350" description="Uncharacterized protein RP318">
    <location>
        <begin position="1"/>
        <end position="116"/>
    </location>
</feature>
<feature type="transmembrane region" description="Helical" evidence="1">
    <location>
        <begin position="58"/>
        <end position="78"/>
    </location>
</feature>
<dbReference type="EMBL" id="AJ235271">
    <property type="protein sequence ID" value="CAA14778.1"/>
    <property type="molecule type" value="Genomic_DNA"/>
</dbReference>
<dbReference type="PIR" id="H71687">
    <property type="entry name" value="H71687"/>
</dbReference>
<dbReference type="RefSeq" id="NP_220701.1">
    <property type="nucleotide sequence ID" value="NC_000963.1"/>
</dbReference>
<dbReference type="RefSeq" id="WP_004599402.1">
    <property type="nucleotide sequence ID" value="NC_000963.1"/>
</dbReference>
<dbReference type="STRING" id="272947.gene:17555398"/>
<dbReference type="EnsemblBacteria" id="CAA14778">
    <property type="protein sequence ID" value="CAA14778"/>
    <property type="gene ID" value="CAA14778"/>
</dbReference>
<dbReference type="KEGG" id="rpr:RP318"/>
<dbReference type="PATRIC" id="fig|272947.5.peg.327"/>
<dbReference type="eggNOG" id="ENOG5033EXQ">
    <property type="taxonomic scope" value="Bacteria"/>
</dbReference>
<dbReference type="HOGENOM" id="CLU_2071325_0_0_5"/>
<dbReference type="OrthoDB" id="7285394at2"/>
<dbReference type="Proteomes" id="UP000002480">
    <property type="component" value="Chromosome"/>
</dbReference>
<dbReference type="GO" id="GO:0016020">
    <property type="term" value="C:membrane"/>
    <property type="evidence" value="ECO:0007669"/>
    <property type="project" value="UniProtKB-SubCell"/>
</dbReference>
<comment type="subcellular location">
    <subcellularLocation>
        <location evidence="2">Membrane</location>
        <topology evidence="2">Single-pass membrane protein</topology>
    </subcellularLocation>
</comment>
<organism>
    <name type="scientific">Rickettsia prowazekii (strain Madrid E)</name>
    <dbReference type="NCBI Taxonomy" id="272947"/>
    <lineage>
        <taxon>Bacteria</taxon>
        <taxon>Pseudomonadati</taxon>
        <taxon>Pseudomonadota</taxon>
        <taxon>Alphaproteobacteria</taxon>
        <taxon>Rickettsiales</taxon>
        <taxon>Rickettsiaceae</taxon>
        <taxon>Rickettsieae</taxon>
        <taxon>Rickettsia</taxon>
        <taxon>typhus group</taxon>
    </lineage>
</organism>
<keyword id="KW-0472">Membrane</keyword>
<keyword id="KW-1185">Reference proteome</keyword>
<keyword id="KW-0812">Transmembrane</keyword>
<keyword id="KW-1133">Transmembrane helix</keyword>
<protein>
    <recommendedName>
        <fullName>Uncharacterized protein RP318</fullName>
    </recommendedName>
</protein>
<evidence type="ECO:0000255" key="1"/>
<evidence type="ECO:0000305" key="2"/>
<name>Y318_RICPR</name>
<gene>
    <name type="ordered locus">RP318</name>
</gene>
<sequence length="116" mass="13651">MNIYAIYINSTQKNNNFIILEEGFSWIAALFSIFWALYHKMWIVVAITVIANIIATTIIVDFKFIFQIFLILSFGFFAADIRENYLNRNNYQLEDIIIANSRIEAELKFLERSILI</sequence>